<accession>Q0WQ41</accession>
<accession>Q712G2</accession>
<accession>Q9SKZ8</accession>
<evidence type="ECO:0000250" key="1">
    <source>
        <dbReference type="UniProtKB" id="Q84MA2"/>
    </source>
</evidence>
<evidence type="ECO:0000256" key="2">
    <source>
        <dbReference type="SAM" id="MobiDB-lite"/>
    </source>
</evidence>
<evidence type="ECO:0000269" key="3">
    <source>
    </source>
</evidence>
<evidence type="ECO:0000269" key="4">
    <source>
    </source>
</evidence>
<evidence type="ECO:0000269" key="5">
    <source>
    </source>
</evidence>
<evidence type="ECO:0000269" key="6">
    <source>
    </source>
</evidence>
<evidence type="ECO:0000269" key="7">
    <source>
    </source>
</evidence>
<evidence type="ECO:0000303" key="8">
    <source>
    </source>
</evidence>
<evidence type="ECO:0000303" key="9">
    <source>
    </source>
</evidence>
<evidence type="ECO:0000305" key="10"/>
<evidence type="ECO:0000312" key="11">
    <source>
        <dbReference type="Araport" id="AT2G32010"/>
    </source>
</evidence>
<evidence type="ECO:0000312" key="12">
    <source>
        <dbReference type="EMBL" id="AAD15403.1"/>
    </source>
</evidence>
<evidence type="ECO:0000312" key="13">
    <source>
        <dbReference type="EMBL" id="CAC81920.1"/>
    </source>
</evidence>
<protein>
    <recommendedName>
        <fullName evidence="9">Type IV inositol polyphosphate 5-phosphatase 7</fullName>
        <shortName evidence="9">At5PTase7</shortName>
        <ecNumber evidence="4 5 6">3.1.3.36</ecNumber>
        <ecNumber evidence="4 5 6">3.1.3.86</ecNumber>
    </recommendedName>
    <alternativeName>
        <fullName evidence="8">Protein CVP2 LIKE 1</fullName>
        <shortName evidence="8">Protein CVL1</shortName>
    </alternativeName>
</protein>
<gene>
    <name evidence="10" type="primary">IP5P7</name>
    <name evidence="8" type="synonym">CVL1</name>
    <name evidence="13" type="synonym">IPP4</name>
    <name evidence="11" type="ordered locus">At2g32010</name>
    <name evidence="12" type="ORF">F22D22.24</name>
</gene>
<keyword id="KW-1003">Cell membrane</keyword>
<keyword id="KW-0378">Hydrolase</keyword>
<keyword id="KW-0472">Membrane</keyword>
<keyword id="KW-0539">Nucleus</keyword>
<keyword id="KW-1185">Reference proteome</keyword>
<name>IP5P7_ARATH</name>
<proteinExistence type="evidence at protein level"/>
<dbReference type="EC" id="3.1.3.36" evidence="4 5 6"/>
<dbReference type="EC" id="3.1.3.86" evidence="4 5 6"/>
<dbReference type="EMBL" id="AC006223">
    <property type="protein sequence ID" value="AAD15403.1"/>
    <property type="status" value="ALT_SEQ"/>
    <property type="molecule type" value="Genomic_DNA"/>
</dbReference>
<dbReference type="EMBL" id="CP002685">
    <property type="protein sequence ID" value="AEC08621.1"/>
    <property type="molecule type" value="Genomic_DNA"/>
</dbReference>
<dbReference type="EMBL" id="CP002685">
    <property type="protein sequence ID" value="AEC08622.1"/>
    <property type="molecule type" value="Genomic_DNA"/>
</dbReference>
<dbReference type="EMBL" id="CP002685">
    <property type="protein sequence ID" value="ANM62725.1"/>
    <property type="molecule type" value="Genomic_DNA"/>
</dbReference>
<dbReference type="EMBL" id="CP002685">
    <property type="protein sequence ID" value="ANM62726.1"/>
    <property type="molecule type" value="Genomic_DNA"/>
</dbReference>
<dbReference type="EMBL" id="AK228865">
    <property type="protein sequence ID" value="BAF00758.1"/>
    <property type="molecule type" value="mRNA"/>
</dbReference>
<dbReference type="EMBL" id="AJ277885">
    <property type="protein sequence ID" value="CAC81920.1"/>
    <property type="status" value="ALT_FRAME"/>
    <property type="molecule type" value="mRNA"/>
</dbReference>
<dbReference type="PIR" id="H84727">
    <property type="entry name" value="H84727"/>
</dbReference>
<dbReference type="RefSeq" id="NP_001189654.1">
    <property type="nucleotide sequence ID" value="NM_001202725.1"/>
</dbReference>
<dbReference type="RefSeq" id="NP_001324864.1">
    <property type="nucleotide sequence ID" value="NM_001336367.1"/>
</dbReference>
<dbReference type="RefSeq" id="NP_001324865.1">
    <property type="nucleotide sequence ID" value="NM_001336366.1"/>
</dbReference>
<dbReference type="RefSeq" id="NP_180761.2">
    <property type="nucleotide sequence ID" value="NM_128761.4"/>
</dbReference>
<dbReference type="SMR" id="Q0WQ41"/>
<dbReference type="FunCoup" id="Q0WQ41">
    <property type="interactions" value="2685"/>
</dbReference>
<dbReference type="STRING" id="3702.Q0WQ41"/>
<dbReference type="PaxDb" id="3702-AT2G32010.1"/>
<dbReference type="EnsemblPlants" id="AT2G32010.1">
    <property type="protein sequence ID" value="AT2G32010.1"/>
    <property type="gene ID" value="AT2G32010"/>
</dbReference>
<dbReference type="EnsemblPlants" id="AT2G32010.2">
    <property type="protein sequence ID" value="AT2G32010.2"/>
    <property type="gene ID" value="AT2G32010"/>
</dbReference>
<dbReference type="EnsemblPlants" id="AT2G32010.3">
    <property type="protein sequence ID" value="AT2G32010.3"/>
    <property type="gene ID" value="AT2G32010"/>
</dbReference>
<dbReference type="EnsemblPlants" id="AT2G32010.4">
    <property type="protein sequence ID" value="AT2G32010.4"/>
    <property type="gene ID" value="AT2G32010"/>
</dbReference>
<dbReference type="GeneID" id="817761"/>
<dbReference type="Gramene" id="AT2G32010.1">
    <property type="protein sequence ID" value="AT2G32010.1"/>
    <property type="gene ID" value="AT2G32010"/>
</dbReference>
<dbReference type="Gramene" id="AT2G32010.2">
    <property type="protein sequence ID" value="AT2G32010.2"/>
    <property type="gene ID" value="AT2G32010"/>
</dbReference>
<dbReference type="Gramene" id="AT2G32010.3">
    <property type="protein sequence ID" value="AT2G32010.3"/>
    <property type="gene ID" value="AT2G32010"/>
</dbReference>
<dbReference type="Gramene" id="AT2G32010.4">
    <property type="protein sequence ID" value="AT2G32010.4"/>
    <property type="gene ID" value="AT2G32010"/>
</dbReference>
<dbReference type="KEGG" id="ath:AT2G32010"/>
<dbReference type="Araport" id="AT2G32010"/>
<dbReference type="TAIR" id="AT2G32010">
    <property type="gene designation" value="CVL1"/>
</dbReference>
<dbReference type="eggNOG" id="KOG0565">
    <property type="taxonomic scope" value="Eukaryota"/>
</dbReference>
<dbReference type="HOGENOM" id="CLU_011711_4_0_1"/>
<dbReference type="InParanoid" id="Q0WQ41"/>
<dbReference type="OMA" id="MPRNSRY"/>
<dbReference type="OrthoDB" id="62798at2759"/>
<dbReference type="PhylomeDB" id="Q0WQ41"/>
<dbReference type="PRO" id="PR:Q0WQ41"/>
<dbReference type="Proteomes" id="UP000006548">
    <property type="component" value="Chromosome 2"/>
</dbReference>
<dbReference type="ExpressionAtlas" id="Q0WQ41">
    <property type="expression patterns" value="baseline and differential"/>
</dbReference>
<dbReference type="GO" id="GO:0005634">
    <property type="term" value="C:nucleus"/>
    <property type="evidence" value="ECO:0000314"/>
    <property type="project" value="UniProtKB"/>
</dbReference>
<dbReference type="GO" id="GO:0005886">
    <property type="term" value="C:plasma membrane"/>
    <property type="evidence" value="ECO:0000314"/>
    <property type="project" value="UniProtKB"/>
</dbReference>
<dbReference type="GO" id="GO:0004445">
    <property type="term" value="F:inositol-polyphosphate 5-phosphatase activity"/>
    <property type="evidence" value="ECO:0007669"/>
    <property type="project" value="InterPro"/>
</dbReference>
<dbReference type="GO" id="GO:0034485">
    <property type="term" value="F:phosphatidylinositol-3,4,5-trisphosphate 5-phosphatase activity"/>
    <property type="evidence" value="ECO:0000314"/>
    <property type="project" value="UniProtKB"/>
</dbReference>
<dbReference type="GO" id="GO:0004439">
    <property type="term" value="F:phosphatidylinositol-4,5-bisphosphate 5-phosphatase activity"/>
    <property type="evidence" value="ECO:0000314"/>
    <property type="project" value="UniProtKB"/>
</dbReference>
<dbReference type="GO" id="GO:0071472">
    <property type="term" value="P:cellular response to salt stress"/>
    <property type="evidence" value="ECO:0000315"/>
    <property type="project" value="UniProtKB"/>
</dbReference>
<dbReference type="GO" id="GO:0010305">
    <property type="term" value="P:leaf vascular tissue pattern formation"/>
    <property type="evidence" value="ECO:0000316"/>
    <property type="project" value="TAIR"/>
</dbReference>
<dbReference type="GO" id="GO:0046856">
    <property type="term" value="P:phosphatidylinositol dephosphorylation"/>
    <property type="evidence" value="ECO:0000314"/>
    <property type="project" value="UniProtKB"/>
</dbReference>
<dbReference type="GO" id="GO:2000377">
    <property type="term" value="P:regulation of reactive oxygen species metabolic process"/>
    <property type="evidence" value="ECO:0000315"/>
    <property type="project" value="UniProtKB"/>
</dbReference>
<dbReference type="FunFam" id="3.60.10.10:FF:000019">
    <property type="entry name" value="Type IV inositol polyphosphate 5-phosphatase 7"/>
    <property type="match status" value="1"/>
</dbReference>
<dbReference type="FunFam" id="3.60.10.10:FF:000023">
    <property type="entry name" value="Type IV inositol polyphosphate 5-phosphatase 7"/>
    <property type="match status" value="1"/>
</dbReference>
<dbReference type="Gene3D" id="3.60.10.10">
    <property type="entry name" value="Endonuclease/exonuclease/phosphatase"/>
    <property type="match status" value="2"/>
</dbReference>
<dbReference type="InterPro" id="IPR036691">
    <property type="entry name" value="Endo/exonu/phosph_ase_sf"/>
</dbReference>
<dbReference type="InterPro" id="IPR045849">
    <property type="entry name" value="IP5P_plant"/>
</dbReference>
<dbReference type="InterPro" id="IPR000300">
    <property type="entry name" value="IPPc"/>
</dbReference>
<dbReference type="PANTHER" id="PTHR45666:SF34">
    <property type="entry name" value="TYPE IV INOSITOL POLYPHOSPHATE 5-PHOSPHATASE 7"/>
    <property type="match status" value="1"/>
</dbReference>
<dbReference type="PANTHER" id="PTHR45666">
    <property type="entry name" value="TYPE IV INOSITOL POLYPHOSPHATE 5-PHOSPHATASE 9"/>
    <property type="match status" value="1"/>
</dbReference>
<dbReference type="Pfam" id="PF22669">
    <property type="entry name" value="Exo_endo_phos2"/>
    <property type="match status" value="2"/>
</dbReference>
<dbReference type="SMART" id="SM00128">
    <property type="entry name" value="IPPc"/>
    <property type="match status" value="1"/>
</dbReference>
<dbReference type="SUPFAM" id="SSF56219">
    <property type="entry name" value="DNase I-like"/>
    <property type="match status" value="2"/>
</dbReference>
<organism>
    <name type="scientific">Arabidopsis thaliana</name>
    <name type="common">Mouse-ear cress</name>
    <dbReference type="NCBI Taxonomy" id="3702"/>
    <lineage>
        <taxon>Eukaryota</taxon>
        <taxon>Viridiplantae</taxon>
        <taxon>Streptophyta</taxon>
        <taxon>Embryophyta</taxon>
        <taxon>Tracheophyta</taxon>
        <taxon>Spermatophyta</taxon>
        <taxon>Magnoliopsida</taxon>
        <taxon>eudicotyledons</taxon>
        <taxon>Gunneridae</taxon>
        <taxon>Pentapetalae</taxon>
        <taxon>rosids</taxon>
        <taxon>malvids</taxon>
        <taxon>Brassicales</taxon>
        <taxon>Brassicaceae</taxon>
        <taxon>Camelineae</taxon>
        <taxon>Arabidopsis</taxon>
    </lineage>
</organism>
<feature type="chain" id="PRO_0000433257" description="Type IV inositol polyphosphate 5-phosphatase 7">
    <location>
        <begin position="1"/>
        <end position="594"/>
    </location>
</feature>
<feature type="region of interest" description="Disordered" evidence="2">
    <location>
        <begin position="246"/>
        <end position="300"/>
    </location>
</feature>
<feature type="region of interest" description="Catalytic 1" evidence="1">
    <location>
        <begin position="435"/>
        <end position="450"/>
    </location>
</feature>
<feature type="region of interest" description="Catalytic 2" evidence="1">
    <location>
        <begin position="515"/>
        <end position="530"/>
    </location>
</feature>
<feature type="compositionally biased region" description="Basic and acidic residues" evidence="2">
    <location>
        <begin position="251"/>
        <end position="261"/>
    </location>
</feature>
<feature type="compositionally biased region" description="Low complexity" evidence="2">
    <location>
        <begin position="262"/>
        <end position="279"/>
    </location>
</feature>
<feature type="sequence conflict" description="In Ref. 4; CAC81920." evidence="10" ref="4">
    <original>T</original>
    <variation>I</variation>
    <location>
        <position position="568"/>
    </location>
</feature>
<comment type="function">
    <text evidence="3 4 5 6 7">Has phosphatase activity toward PtdIns(4,5)P2 and at a lower extent toward PtdIns(3,4,5)P3 but not toward Ins(1,4,5)P3 (PubMed:19473324, PubMed:21677096, PubMed:23658066). Acts redundantly with CVP2 for maintaining vascular continuity (PubMed:19363154, PubMed:25813544). Regulates phosphoinositide-dependent VAN3 localization (PubMed:19473324). Functions in salt stress response by regulating reactive oxygen species (ROS) production and stress-responsive genes expression (PubMed:21677096).</text>
</comment>
<comment type="catalytic activity">
    <reaction evidence="4 5 6">
        <text>a 1,2-diacyl-sn-glycero-3-phospho-(1D-myo-inositol-4,5-bisphosphate) + H2O = a 1,2-diacyl-sn-glycero-3-phospho-(1D-myo-inositol 4-phosphate) + phosphate</text>
        <dbReference type="Rhea" id="RHEA:22764"/>
        <dbReference type="ChEBI" id="CHEBI:15377"/>
        <dbReference type="ChEBI" id="CHEBI:43474"/>
        <dbReference type="ChEBI" id="CHEBI:58178"/>
        <dbReference type="ChEBI" id="CHEBI:58456"/>
        <dbReference type="EC" id="3.1.3.36"/>
    </reaction>
</comment>
<comment type="catalytic activity">
    <reaction evidence="4 5 6">
        <text>a 1,2-diacyl-sn-glycero-3-phospho-(1D-myo-inositol-3,4,5-trisphosphate) + H2O = a 1,2-diacyl-sn-glycero-3-phospho-(1D-myo-inositol-3,4-bisphosphate) + phosphate</text>
        <dbReference type="Rhea" id="RHEA:25528"/>
        <dbReference type="ChEBI" id="CHEBI:15377"/>
        <dbReference type="ChEBI" id="CHEBI:43474"/>
        <dbReference type="ChEBI" id="CHEBI:57658"/>
        <dbReference type="ChEBI" id="CHEBI:57836"/>
        <dbReference type="EC" id="3.1.3.86"/>
    </reaction>
</comment>
<comment type="subcellular location">
    <subcellularLocation>
        <location>Nucleus</location>
    </subcellularLocation>
    <subcellularLocation>
        <location>Cell membrane</location>
        <topology evidence="5">Peripheral membrane protein</topology>
    </subcellularLocation>
</comment>
<comment type="tissue specificity">
    <text evidence="4">Broadly expressed in emerging organs. Mostly localized in procambium of growing organs. Restricted to vascular differentiating cells of young organs.</text>
</comment>
<comment type="developmental stage">
    <text evidence="4">Expressed in developing veins of late torpedo, walking stick and bent cotyledon stage embryos.</text>
</comment>
<comment type="disruption phenotype">
    <text evidence="4 5">No visible phenotype (PubMed:19473324). Increased salt sensitivity with reduced production of reactive oxygen species (ROS) (PubMed:21677096).</text>
</comment>
<comment type="miscellaneous">
    <text evidence="7">Cvp1 and cvp2 double mutant displays high PtdIns(4,5)P2 levels.</text>
</comment>
<comment type="similarity">
    <text evidence="10">Belongs to the inositol polyphosphate 5-phosphatase family.</text>
</comment>
<comment type="sequence caution" evidence="10">
    <conflict type="erroneous gene model prediction">
        <sequence resource="EMBL-CDS" id="AAD15403"/>
    </conflict>
</comment>
<comment type="sequence caution" evidence="10">
    <conflict type="frameshift">
        <sequence resource="EMBL-CDS" id="CAC81920"/>
    </conflict>
</comment>
<reference key="1">
    <citation type="journal article" date="1999" name="Nature">
        <title>Sequence and analysis of chromosome 2 of the plant Arabidopsis thaliana.</title>
        <authorList>
            <person name="Lin X."/>
            <person name="Kaul S."/>
            <person name="Rounsley S.D."/>
            <person name="Shea T.P."/>
            <person name="Benito M.-I."/>
            <person name="Town C.D."/>
            <person name="Fujii C.Y."/>
            <person name="Mason T.M."/>
            <person name="Bowman C.L."/>
            <person name="Barnstead M.E."/>
            <person name="Feldblyum T.V."/>
            <person name="Buell C.R."/>
            <person name="Ketchum K.A."/>
            <person name="Lee J.J."/>
            <person name="Ronning C.M."/>
            <person name="Koo H.L."/>
            <person name="Moffat K.S."/>
            <person name="Cronin L.A."/>
            <person name="Shen M."/>
            <person name="Pai G."/>
            <person name="Van Aken S."/>
            <person name="Umayam L."/>
            <person name="Tallon L.J."/>
            <person name="Gill J.E."/>
            <person name="Adams M.D."/>
            <person name="Carrera A.J."/>
            <person name="Creasy T.H."/>
            <person name="Goodman H.M."/>
            <person name="Somerville C.R."/>
            <person name="Copenhaver G.P."/>
            <person name="Preuss D."/>
            <person name="Nierman W.C."/>
            <person name="White O."/>
            <person name="Eisen J.A."/>
            <person name="Salzberg S.L."/>
            <person name="Fraser C.M."/>
            <person name="Venter J.C."/>
        </authorList>
    </citation>
    <scope>NUCLEOTIDE SEQUENCE [LARGE SCALE GENOMIC DNA]</scope>
    <source>
        <strain>cv. Columbia</strain>
    </source>
</reference>
<reference key="2">
    <citation type="journal article" date="2017" name="Plant J.">
        <title>Araport11: a complete reannotation of the Arabidopsis thaliana reference genome.</title>
        <authorList>
            <person name="Cheng C.Y."/>
            <person name="Krishnakumar V."/>
            <person name="Chan A.P."/>
            <person name="Thibaud-Nissen F."/>
            <person name="Schobel S."/>
            <person name="Town C.D."/>
        </authorList>
    </citation>
    <scope>GENOME REANNOTATION</scope>
    <source>
        <strain>cv. Columbia</strain>
    </source>
</reference>
<reference key="3">
    <citation type="submission" date="2006-07" db="EMBL/GenBank/DDBJ databases">
        <title>Large-scale analysis of RIKEN Arabidopsis full-length (RAFL) cDNAs.</title>
        <authorList>
            <person name="Totoki Y."/>
            <person name="Seki M."/>
            <person name="Ishida J."/>
            <person name="Nakajima M."/>
            <person name="Enju A."/>
            <person name="Kamiya A."/>
            <person name="Narusaka M."/>
            <person name="Shin-i T."/>
            <person name="Nakagawa M."/>
            <person name="Sakamoto N."/>
            <person name="Oishi K."/>
            <person name="Kohara Y."/>
            <person name="Kobayashi M."/>
            <person name="Toyoda A."/>
            <person name="Sakaki Y."/>
            <person name="Sakurai T."/>
            <person name="Iida K."/>
            <person name="Akiyama K."/>
            <person name="Satou M."/>
            <person name="Toyoda T."/>
            <person name="Konagaya A."/>
            <person name="Carninci P."/>
            <person name="Kawai J."/>
            <person name="Hayashizaki Y."/>
            <person name="Shinozaki K."/>
        </authorList>
    </citation>
    <scope>NUCLEOTIDE SEQUENCE [LARGE SCALE MRNA]</scope>
    <source>
        <strain>cv. Columbia</strain>
    </source>
</reference>
<reference key="4">
    <citation type="submission" date="2004-09" db="EMBL/GenBank/DDBJ databases">
        <authorList>
            <person name="Lin W.H."/>
            <person name="Xu Z.H."/>
            <person name="Mueller-Roeber B."/>
            <person name="Xue H.W."/>
        </authorList>
    </citation>
    <scope>NUCLEOTIDE SEQUENCE [MRNA] OF 17-594</scope>
    <source>
        <strain>cv. Columbia</strain>
        <tissue evidence="13">Hypocotyl</tissue>
    </source>
</reference>
<reference key="5">
    <citation type="journal article" date="2001" name="Plant Physiol.">
        <title>Molecular characterization of At5PTase1, an inositol phosphatase capable of terminating inositol trisphosphate signaling.</title>
        <authorList>
            <person name="Berdy S.E."/>
            <person name="Kudla J."/>
            <person name="Gruissem W."/>
            <person name="Gillaspy G.E."/>
        </authorList>
    </citation>
    <scope>GENE FAMILY</scope>
</reference>
<reference key="6">
    <citation type="journal article" date="2009" name="Development">
        <title>Phosphoinositide-dependent regulation of VAN3 ARF-GAP localization and activity essential for vascular tissue continuity in plants.</title>
        <authorList>
            <person name="Naramoto S."/>
            <person name="Sawa S."/>
            <person name="Koizumi K."/>
            <person name="Uemura T."/>
            <person name="Ueda T."/>
            <person name="Friml J."/>
            <person name="Nakano A."/>
            <person name="Fukuda H."/>
        </authorList>
    </citation>
    <scope>FUNCTION</scope>
</reference>
<reference key="7">
    <citation type="journal article" date="2009" name="Plant J.">
        <title>CVP2- and CVL1-mediated phosphoinositide signaling as a regulator of the ARF GAP SFC/VAN3 in establishment of foliar vein patterns.</title>
        <authorList>
            <person name="Carland F."/>
            <person name="Nelson T."/>
        </authorList>
    </citation>
    <scope>FUNCTION</scope>
    <scope>DISRUPTION PHENOTYPE</scope>
    <scope>TISSUE SPECIFICITY</scope>
    <scope>DEVELOPMENTAL STAGE</scope>
    <scope>CATALYTIC ACTIVITY</scope>
</reference>
<reference key="8">
    <citation type="journal article" date="2011" name="Plant Physiol.">
        <title>Inositol polyphosphate 5-phosphatase7 regulates the production of reactive oxygen species and salt tolerance in Arabidopsis.</title>
        <authorList>
            <person name="Kaye Y."/>
            <person name="Golani Y."/>
            <person name="Singer Y."/>
            <person name="Leshem Y."/>
            <person name="Cohen G."/>
            <person name="Ercetin M."/>
            <person name="Gillaspy G."/>
            <person name="Levine A."/>
        </authorList>
    </citation>
    <scope>DISRUPTION PHENOTYPE</scope>
    <scope>SUBCELLULAR LOCATION</scope>
    <scope>FUNCTION</scope>
    <scope>CATALYTIC ACTIVITY</scope>
</reference>
<reference key="9">
    <citation type="journal article" date="2013" name="Mol. Plant">
        <title>Inositol polyphosphate phosphatidylinositol 5-phosphatase9 (At5ptase9) controls plant salt tolerance by regulating endocytosis.</title>
        <authorList>
            <person name="Golani Y."/>
            <person name="Kaye Y."/>
            <person name="Gilhar O."/>
            <person name="Ercetin M."/>
            <person name="Gillaspy G."/>
            <person name="Levine A."/>
        </authorList>
    </citation>
    <scope>CATALYTIC ACTIVITY</scope>
    <scope>FUNCTION</scope>
</reference>
<reference key="10">
    <citation type="journal article" date="2015" name="Development">
        <title>Primary root protophloem differentiation requires balanced phosphatidylinositol-4,5-biphosphate levels and systemically affects root branching.</title>
        <authorList>
            <person name="Rodriguez-Villalon A."/>
            <person name="Gujas B."/>
            <person name="van Wijk R."/>
            <person name="Munnik T."/>
            <person name="Hardtke C.S."/>
        </authorList>
    </citation>
    <scope>FUNCTION</scope>
</reference>
<sequence length="594" mass="68245">MRDDKTKKSKLSWSKKMVRKWFNIKSKTEKFQADVSLPQGVEVEHRNSFSEREPCTIKKSKTEKLNKNWEQQARQRKMNYENPRIIDVQNHSIFVATWNVAGRSPPEDLNLDEWLHSSAPADIYVLGFQEIVPLNAGNVLGAEDNGPAKKWHSLIRKTLNNLPGASSACHTPSPIPVPIAEIDADFSGSSRQKNETFFNRRSFQTPSVWSMEENDPSISQPRLDRRFSVCDRVFFSHRPSDFDPSFRCGHRPSDYSRRPSDYSRPSDYYSRPSNYSRPSDVSRWGSSDDDNGPGDSPSTFLNSPGSFLGSAANENGYRTPWNSSQYCLVASKQMVGIFLTIWVKSELREHVKNMKVSCVGRGLMGYLGNKGSISISMLLHQTSFCFVCTHLTSGQKEGDELRRNSDVMEILKKTRFPRVQSSADEKSPENILQHDRVIWLGDLNYRIALSYRSAKALVEMQNWRALLENDQLRIEQKRGHVFKGWNEGKIYFPPTYKYSNNSDRYAGGDLHPKEKRRTPAWCDRILWHGEGLHQLSYVRGESRFSDHRPVYGIFSAEVESNHKRSKRTNSHSTARVEAEELLPYARGYTELTFF</sequence>